<evidence type="ECO:0000250" key="1">
    <source>
        <dbReference type="UniProtKB" id="A0A0D4WTV1"/>
    </source>
</evidence>
<evidence type="ECO:0000250" key="2">
    <source>
        <dbReference type="UniProtKB" id="A0A0D4WV12"/>
    </source>
</evidence>
<evidence type="ECO:0000250" key="3">
    <source>
        <dbReference type="UniProtKB" id="P0CE80"/>
    </source>
</evidence>
<evidence type="ECO:0000250" key="4">
    <source>
        <dbReference type="UniProtKB" id="Q4ZFU2"/>
    </source>
</evidence>
<evidence type="ECO:0000250" key="5">
    <source>
        <dbReference type="UniProtKB" id="Q8I914"/>
    </source>
</evidence>
<evidence type="ECO:0000303" key="6">
    <source>
    </source>
</evidence>
<evidence type="ECO:0000305" key="7"/>
<evidence type="ECO:0000305" key="8">
    <source>
    </source>
</evidence>
<accession>C0JB58</accession>
<name>B2I2_SICPE</name>
<reference key="1">
    <citation type="journal article" date="2009" name="Mol. Biol. Evol.">
        <title>Molecular evolution, functional variation, and proposed nomenclature of the gene family that includes sphingomyelinase D in sicariid spider venoms.</title>
        <authorList>
            <person name="Binford G.J."/>
            <person name="Bodner M.R."/>
            <person name="Cordes M.H."/>
            <person name="Baldwin K.L."/>
            <person name="Rynerson M.R."/>
            <person name="Burns S.N."/>
            <person name="Zobel-Thropp P.A."/>
        </authorList>
    </citation>
    <scope>NUCLEOTIDE SEQUENCE [MRNA]</scope>
    <scope>NOMENCLATURE</scope>
    <source>
        <tissue>Venom gland</tissue>
    </source>
</reference>
<organism>
    <name type="scientific">Sicarius peruensis</name>
    <name type="common">Six-eyed sand spider</name>
    <dbReference type="NCBI Taxonomy" id="571541"/>
    <lineage>
        <taxon>Eukaryota</taxon>
        <taxon>Metazoa</taxon>
        <taxon>Ecdysozoa</taxon>
        <taxon>Arthropoda</taxon>
        <taxon>Chelicerata</taxon>
        <taxon>Arachnida</taxon>
        <taxon>Araneae</taxon>
        <taxon>Araneomorphae</taxon>
        <taxon>Haplogynae</taxon>
        <taxon>Scytodoidea</taxon>
        <taxon>Sicariidae</taxon>
        <taxon>Sicarius</taxon>
    </lineage>
</organism>
<sequence length="275" mass="31780">WIMGHMVNAIEQVDEFLDLGANAIEFDVDFDDDGVAKYTHHGIPCDCGRLCTKYAVFTEYLDYVRQVTTPGDPKFRKELVLLALDLKLQRISSEKAYAAGVDVATKLLDHYWMRGWNGGRAYILLNIPLVEDYEFIRAFKDTLRKEGHEQYNAKVGINFTGNEDLDEIREVLEKLGEDEHIWQADGITSCFPRGTERLKKALEKRDTPGYKYISKVYAWTLVRSSIMRRSLRLGVDGVMSNYPDRVVKVLKEKEFSDKFRLATYADNPWEKFTPI</sequence>
<comment type="function">
    <text evidence="1 3">Dermonecrotic toxins cleave the phosphodiester linkage between the phosphate and headgroup of certain phospholipids (sphingolipid and lysolipid substrates), forming an alcohol (often choline) and a cyclic phosphate (By similarity). This toxin acts on sphingomyelin (SM) (By similarity). It may also act on ceramide phosphoethanolamine (CPE), lysophosphatidylcholine (LPC) and lysophosphatidylethanolamine (LPE), but not on lysophosphatidylserine (LPS), and lysophosphatidylglycerol (LPG) (By similarity). It acts by transphosphatidylation, releasing exclusively cyclic phosphate products as second products (By similarity). Induces dermonecrosis, hemolysis, increased vascular permeability, edema, inflammatory response, and platelet aggregation (By similarity).</text>
</comment>
<comment type="catalytic activity">
    <reaction evidence="1">
        <text>an N-(acyl)-sphingosylphosphocholine = an N-(acyl)-sphingosyl-1,3-cyclic phosphate + choline</text>
        <dbReference type="Rhea" id="RHEA:60652"/>
        <dbReference type="ChEBI" id="CHEBI:15354"/>
        <dbReference type="ChEBI" id="CHEBI:64583"/>
        <dbReference type="ChEBI" id="CHEBI:143892"/>
    </reaction>
</comment>
<comment type="catalytic activity">
    <reaction evidence="1">
        <text>an N-(acyl)-sphingosylphosphoethanolamine = an N-(acyl)-sphingosyl-1,3-cyclic phosphate + ethanolamine</text>
        <dbReference type="Rhea" id="RHEA:60648"/>
        <dbReference type="ChEBI" id="CHEBI:57603"/>
        <dbReference type="ChEBI" id="CHEBI:143891"/>
        <dbReference type="ChEBI" id="CHEBI:143892"/>
    </reaction>
</comment>
<comment type="catalytic activity">
    <reaction evidence="1">
        <text>a 1-acyl-sn-glycero-3-phosphocholine = a 1-acyl-sn-glycero-2,3-cyclic phosphate + choline</text>
        <dbReference type="Rhea" id="RHEA:60700"/>
        <dbReference type="ChEBI" id="CHEBI:15354"/>
        <dbReference type="ChEBI" id="CHEBI:58168"/>
        <dbReference type="ChEBI" id="CHEBI:143947"/>
    </reaction>
</comment>
<comment type="catalytic activity">
    <reaction evidence="1">
        <text>a 1-acyl-sn-glycero-3-phosphoethanolamine = a 1-acyl-sn-glycero-2,3-cyclic phosphate + ethanolamine</text>
        <dbReference type="Rhea" id="RHEA:60704"/>
        <dbReference type="ChEBI" id="CHEBI:57603"/>
        <dbReference type="ChEBI" id="CHEBI:64381"/>
        <dbReference type="ChEBI" id="CHEBI:143947"/>
    </reaction>
</comment>
<comment type="cofactor">
    <cofactor evidence="5">
        <name>Mg(2+)</name>
        <dbReference type="ChEBI" id="CHEBI:18420"/>
    </cofactor>
    <text evidence="5">Binds 1 Mg(2+) ion per subunit.</text>
</comment>
<comment type="subcellular location">
    <subcellularLocation>
        <location evidence="8">Secreted</location>
    </subcellularLocation>
</comment>
<comment type="tissue specificity">
    <text evidence="8">Expressed by the venom gland.</text>
</comment>
<comment type="similarity">
    <text evidence="7">Belongs to the arthropod phospholipase D family. Class II subfamily.</text>
</comment>
<comment type="caution">
    <text evidence="1 2 4">The most common activity assay for dermonecrotic toxins detects enzymatic activity by monitoring choline release from substrate. Liberation of choline from sphingomyelin (SM) or lysophosphatidylcholine (LPC) is commonly assumed to result from substrate hydrolysis, giving either ceramide-1-phosphate (C1P) or lysophosphatidic acid (LPA), respectively, as a second product. However, two studies from Lajoie and colleagues (2013 and 2015) report the observation of exclusive formation of cyclic phosphate products as second products, resulting from intramolecular transphosphatidylation. Cyclic phosphates have vastly different biological properties from their monoester counterparts, and they may be relevant to the pathology of brown spider envenomation.</text>
</comment>
<feature type="chain" id="PRO_0000392874" description="Dermonecrotic toxin SpeSicTox-betaIIA2ii">
    <location>
        <begin position="1" status="less than"/>
        <end position="275"/>
    </location>
</feature>
<feature type="active site" evidence="5">
    <location>
        <position position="5"/>
    </location>
</feature>
<feature type="active site" description="Nucleophile" evidence="5">
    <location>
        <position position="41"/>
    </location>
</feature>
<feature type="binding site" evidence="5">
    <location>
        <position position="25"/>
    </location>
    <ligand>
        <name>Mg(2+)</name>
        <dbReference type="ChEBI" id="CHEBI:18420"/>
    </ligand>
</feature>
<feature type="binding site" evidence="5">
    <location>
        <position position="27"/>
    </location>
    <ligand>
        <name>Mg(2+)</name>
        <dbReference type="ChEBI" id="CHEBI:18420"/>
    </ligand>
</feature>
<feature type="binding site" evidence="5">
    <location>
        <position position="85"/>
    </location>
    <ligand>
        <name>Mg(2+)</name>
        <dbReference type="ChEBI" id="CHEBI:18420"/>
    </ligand>
</feature>
<feature type="disulfide bond" evidence="3">
    <location>
        <begin position="45"/>
        <end position="51"/>
    </location>
</feature>
<feature type="disulfide bond" evidence="3">
    <location>
        <begin position="47"/>
        <end position="190"/>
    </location>
</feature>
<feature type="non-terminal residue">
    <location>
        <position position="1"/>
    </location>
</feature>
<keyword id="KW-0204">Cytolysis</keyword>
<keyword id="KW-1061">Dermonecrotic toxin</keyword>
<keyword id="KW-1015">Disulfide bond</keyword>
<keyword id="KW-0354">Hemolysis</keyword>
<keyword id="KW-0442">Lipid degradation</keyword>
<keyword id="KW-0443">Lipid metabolism</keyword>
<keyword id="KW-0456">Lyase</keyword>
<keyword id="KW-0460">Magnesium</keyword>
<keyword id="KW-0479">Metal-binding</keyword>
<keyword id="KW-0964">Secreted</keyword>
<keyword id="KW-0800">Toxin</keyword>
<protein>
    <recommendedName>
        <fullName evidence="6">Dermonecrotic toxin SpeSicTox-betaIIA2ii</fullName>
        <ecNumber evidence="4">4.6.1.-</ecNumber>
    </recommendedName>
    <alternativeName>
        <fullName>Phospholipase D</fullName>
        <shortName>PLD</shortName>
    </alternativeName>
    <alternativeName>
        <fullName>Sphingomyelin phosphodiesterase D</fullName>
        <shortName>SMD</shortName>
        <shortName>SMase D</shortName>
        <shortName>Sphingomyelinase D</shortName>
    </alternativeName>
</protein>
<proteinExistence type="evidence at transcript level"/>
<dbReference type="EC" id="4.6.1.-" evidence="4"/>
<dbReference type="EMBL" id="FJ171493">
    <property type="protein sequence ID" value="ACN48989.1"/>
    <property type="molecule type" value="mRNA"/>
</dbReference>
<dbReference type="EMBL" id="FJ171494">
    <property type="protein sequence ID" value="ACN48990.1"/>
    <property type="molecule type" value="mRNA"/>
</dbReference>
<dbReference type="EMBL" id="FJ171499">
    <property type="protein sequence ID" value="ACN48995.1"/>
    <property type="molecule type" value="mRNA"/>
</dbReference>
<dbReference type="EMBL" id="FJ171501">
    <property type="protein sequence ID" value="ACN48997.1"/>
    <property type="molecule type" value="mRNA"/>
</dbReference>
<dbReference type="SMR" id="C0JB58"/>
<dbReference type="GO" id="GO:0005576">
    <property type="term" value="C:extracellular region"/>
    <property type="evidence" value="ECO:0007669"/>
    <property type="project" value="UniProtKB-SubCell"/>
</dbReference>
<dbReference type="GO" id="GO:0016829">
    <property type="term" value="F:lyase activity"/>
    <property type="evidence" value="ECO:0007669"/>
    <property type="project" value="UniProtKB-KW"/>
</dbReference>
<dbReference type="GO" id="GO:0046872">
    <property type="term" value="F:metal ion binding"/>
    <property type="evidence" value="ECO:0007669"/>
    <property type="project" value="UniProtKB-KW"/>
</dbReference>
<dbReference type="GO" id="GO:0008081">
    <property type="term" value="F:phosphoric diester hydrolase activity"/>
    <property type="evidence" value="ECO:0007669"/>
    <property type="project" value="InterPro"/>
</dbReference>
<dbReference type="GO" id="GO:0090729">
    <property type="term" value="F:toxin activity"/>
    <property type="evidence" value="ECO:0007669"/>
    <property type="project" value="UniProtKB-KW"/>
</dbReference>
<dbReference type="GO" id="GO:0031640">
    <property type="term" value="P:killing of cells of another organism"/>
    <property type="evidence" value="ECO:0007669"/>
    <property type="project" value="UniProtKB-KW"/>
</dbReference>
<dbReference type="GO" id="GO:0016042">
    <property type="term" value="P:lipid catabolic process"/>
    <property type="evidence" value="ECO:0007669"/>
    <property type="project" value="UniProtKB-KW"/>
</dbReference>
<dbReference type="CDD" id="cd08576">
    <property type="entry name" value="GDPD_like_SMaseD_PLD"/>
    <property type="match status" value="1"/>
</dbReference>
<dbReference type="Gene3D" id="3.20.20.190">
    <property type="entry name" value="Phosphatidylinositol (PI) phosphodiesterase"/>
    <property type="match status" value="1"/>
</dbReference>
<dbReference type="InterPro" id="IPR017946">
    <property type="entry name" value="PLC-like_Pdiesterase_TIM-brl"/>
</dbReference>
<dbReference type="SUPFAM" id="SSF51695">
    <property type="entry name" value="PLC-like phosphodiesterases"/>
    <property type="match status" value="1"/>
</dbReference>